<comment type="function">
    <text evidence="1">This protein is one of the early assembly proteins of the 50S ribosomal subunit, although it is not seen to bind rRNA by itself. It is important during the early stages of 50S assembly.</text>
</comment>
<comment type="subunit">
    <text evidence="1">Part of the 50S ribosomal subunit.</text>
</comment>
<comment type="similarity">
    <text evidence="1">Belongs to the universal ribosomal protein uL13 family.</text>
</comment>
<organism>
    <name type="scientific">Microcystis aeruginosa (strain NIES-843 / IAM M-2473)</name>
    <dbReference type="NCBI Taxonomy" id="449447"/>
    <lineage>
        <taxon>Bacteria</taxon>
        <taxon>Bacillati</taxon>
        <taxon>Cyanobacteriota</taxon>
        <taxon>Cyanophyceae</taxon>
        <taxon>Oscillatoriophycideae</taxon>
        <taxon>Chroococcales</taxon>
        <taxon>Microcystaceae</taxon>
        <taxon>Microcystis</taxon>
    </lineage>
</organism>
<keyword id="KW-0687">Ribonucleoprotein</keyword>
<keyword id="KW-0689">Ribosomal protein</keyword>
<feature type="chain" id="PRO_1000087093" description="Large ribosomal subunit protein uL13">
    <location>
        <begin position="1"/>
        <end position="151"/>
    </location>
</feature>
<evidence type="ECO:0000255" key="1">
    <source>
        <dbReference type="HAMAP-Rule" id="MF_01366"/>
    </source>
</evidence>
<evidence type="ECO:0000305" key="2"/>
<gene>
    <name evidence="1" type="primary">rplM</name>
    <name evidence="1" type="synonym">rpl13</name>
    <name type="ordered locus">MAE_52510</name>
</gene>
<accession>B0JY35</accession>
<dbReference type="EMBL" id="AP009552">
    <property type="protein sequence ID" value="BAG05073.1"/>
    <property type="molecule type" value="Genomic_DNA"/>
</dbReference>
<dbReference type="RefSeq" id="WP_002735375.1">
    <property type="nucleotide sequence ID" value="NC_010296.1"/>
</dbReference>
<dbReference type="SMR" id="B0JY35"/>
<dbReference type="STRING" id="449447.MAE_52510"/>
<dbReference type="PaxDb" id="449447-MAE_52510"/>
<dbReference type="EnsemblBacteria" id="BAG05073">
    <property type="protein sequence ID" value="BAG05073"/>
    <property type="gene ID" value="MAE_52510"/>
</dbReference>
<dbReference type="GeneID" id="66705720"/>
<dbReference type="KEGG" id="mar:MAE_52510"/>
<dbReference type="eggNOG" id="COG0102">
    <property type="taxonomic scope" value="Bacteria"/>
</dbReference>
<dbReference type="HOGENOM" id="CLU_082184_2_2_3"/>
<dbReference type="BioCyc" id="MAER449447:MAE_RS22825-MONOMER"/>
<dbReference type="Proteomes" id="UP000001510">
    <property type="component" value="Chromosome"/>
</dbReference>
<dbReference type="GO" id="GO:0022625">
    <property type="term" value="C:cytosolic large ribosomal subunit"/>
    <property type="evidence" value="ECO:0007669"/>
    <property type="project" value="TreeGrafter"/>
</dbReference>
<dbReference type="GO" id="GO:0003729">
    <property type="term" value="F:mRNA binding"/>
    <property type="evidence" value="ECO:0007669"/>
    <property type="project" value="TreeGrafter"/>
</dbReference>
<dbReference type="GO" id="GO:0003735">
    <property type="term" value="F:structural constituent of ribosome"/>
    <property type="evidence" value="ECO:0007669"/>
    <property type="project" value="InterPro"/>
</dbReference>
<dbReference type="GO" id="GO:0017148">
    <property type="term" value="P:negative regulation of translation"/>
    <property type="evidence" value="ECO:0007669"/>
    <property type="project" value="TreeGrafter"/>
</dbReference>
<dbReference type="GO" id="GO:0006412">
    <property type="term" value="P:translation"/>
    <property type="evidence" value="ECO:0007669"/>
    <property type="project" value="UniProtKB-UniRule"/>
</dbReference>
<dbReference type="CDD" id="cd00392">
    <property type="entry name" value="Ribosomal_L13"/>
    <property type="match status" value="1"/>
</dbReference>
<dbReference type="FunFam" id="3.90.1180.10:FF:000001">
    <property type="entry name" value="50S ribosomal protein L13"/>
    <property type="match status" value="1"/>
</dbReference>
<dbReference type="Gene3D" id="3.90.1180.10">
    <property type="entry name" value="Ribosomal protein L13"/>
    <property type="match status" value="1"/>
</dbReference>
<dbReference type="HAMAP" id="MF_01366">
    <property type="entry name" value="Ribosomal_uL13"/>
    <property type="match status" value="1"/>
</dbReference>
<dbReference type="InterPro" id="IPR005822">
    <property type="entry name" value="Ribosomal_uL13"/>
</dbReference>
<dbReference type="InterPro" id="IPR005823">
    <property type="entry name" value="Ribosomal_uL13_bac-type"/>
</dbReference>
<dbReference type="InterPro" id="IPR023563">
    <property type="entry name" value="Ribosomal_uL13_CS"/>
</dbReference>
<dbReference type="InterPro" id="IPR036899">
    <property type="entry name" value="Ribosomal_uL13_sf"/>
</dbReference>
<dbReference type="NCBIfam" id="TIGR01066">
    <property type="entry name" value="rplM_bact"/>
    <property type="match status" value="1"/>
</dbReference>
<dbReference type="PANTHER" id="PTHR11545:SF2">
    <property type="entry name" value="LARGE RIBOSOMAL SUBUNIT PROTEIN UL13M"/>
    <property type="match status" value="1"/>
</dbReference>
<dbReference type="PANTHER" id="PTHR11545">
    <property type="entry name" value="RIBOSOMAL PROTEIN L13"/>
    <property type="match status" value="1"/>
</dbReference>
<dbReference type="Pfam" id="PF00572">
    <property type="entry name" value="Ribosomal_L13"/>
    <property type="match status" value="1"/>
</dbReference>
<dbReference type="PIRSF" id="PIRSF002181">
    <property type="entry name" value="Ribosomal_L13"/>
    <property type="match status" value="1"/>
</dbReference>
<dbReference type="SUPFAM" id="SSF52161">
    <property type="entry name" value="Ribosomal protein L13"/>
    <property type="match status" value="1"/>
</dbReference>
<dbReference type="PROSITE" id="PS00783">
    <property type="entry name" value="RIBOSOMAL_L13"/>
    <property type="match status" value="1"/>
</dbReference>
<reference key="1">
    <citation type="journal article" date="2007" name="DNA Res.">
        <title>Complete genomic structure of the bloom-forming toxic cyanobacterium Microcystis aeruginosa NIES-843.</title>
        <authorList>
            <person name="Kaneko T."/>
            <person name="Nakajima N."/>
            <person name="Okamoto S."/>
            <person name="Suzuki I."/>
            <person name="Tanabe Y."/>
            <person name="Tamaoki M."/>
            <person name="Nakamura Y."/>
            <person name="Kasai F."/>
            <person name="Watanabe A."/>
            <person name="Kawashima K."/>
            <person name="Kishida Y."/>
            <person name="Ono A."/>
            <person name="Shimizu Y."/>
            <person name="Takahashi C."/>
            <person name="Minami C."/>
            <person name="Fujishiro T."/>
            <person name="Kohara M."/>
            <person name="Katoh M."/>
            <person name="Nakazaki N."/>
            <person name="Nakayama S."/>
            <person name="Yamada M."/>
            <person name="Tabata S."/>
            <person name="Watanabe M.M."/>
        </authorList>
    </citation>
    <scope>NUCLEOTIDE SEQUENCE [LARGE SCALE GENOMIC DNA]</scope>
    <source>
        <strain>NIES-843 / IAM M-247</strain>
    </source>
</reference>
<sequence>MNKTPLPNLETLEQKWYVIDAADQRLGRLATEIAMILRGKNKATFTPHLDTGDFVIVINAEKVTVTGKKRQQKVYRRDSGRPGGMKVESFDKLQKRIPERIIEHAVKGMLPKNSLGRKLFTKLKVYAGAEHPHQAQQPEVLAINTIPAGGN</sequence>
<name>RL13_MICAN</name>
<proteinExistence type="inferred from homology"/>
<protein>
    <recommendedName>
        <fullName evidence="1">Large ribosomal subunit protein uL13</fullName>
    </recommendedName>
    <alternativeName>
        <fullName evidence="2">50S ribosomal protein L13</fullName>
    </alternativeName>
</protein>